<gene>
    <name type="primary">fadA5</name>
    <name type="ordered locus">Rv3546</name>
</gene>
<organism>
    <name type="scientific">Mycobacterium tuberculosis (strain ATCC 25618 / H37Rv)</name>
    <dbReference type="NCBI Taxonomy" id="83332"/>
    <lineage>
        <taxon>Bacteria</taxon>
        <taxon>Bacillati</taxon>
        <taxon>Actinomycetota</taxon>
        <taxon>Actinomycetes</taxon>
        <taxon>Mycobacteriales</taxon>
        <taxon>Mycobacteriaceae</taxon>
        <taxon>Mycobacterium</taxon>
        <taxon>Mycobacterium tuberculosis complex</taxon>
    </lineage>
</organism>
<keyword id="KW-0002">3D-structure</keyword>
<keyword id="KW-0012">Acyltransferase</keyword>
<keyword id="KW-0153">Cholesterol metabolism</keyword>
<keyword id="KW-0442">Lipid degradation</keyword>
<keyword id="KW-0443">Lipid metabolism</keyword>
<keyword id="KW-1185">Reference proteome</keyword>
<keyword id="KW-0753">Steroid metabolism</keyword>
<keyword id="KW-1207">Sterol metabolism</keyword>
<keyword id="KW-0808">Transferase</keyword>
<keyword id="KW-0843">Virulence</keyword>
<name>FADA5_MYCTU</name>
<sequence>MGYPVIVEATRSPIGKRNGWLSGLHATELLGAVQKAVVDKAGIQSGLHAGDVEQVIGGCVTQFGEQSNNISRVAWLTAGLPEHVGATTVDCQCGSGQQANHLIAGLIAAGAIDVGIACGIEAMSRVGLGANAGPDRSLIRAQSWDIDLPNQFEAAERIAKRRGITREDVDVFGLESQRRAQRAWAEGRFDREISPIQAPVLDEQNQPTGERRLVFRDQGLRETTMAGLGELKPVLEGGIHTAGTSSQISDGAAAVLWMDEAVARAHGLTPRARIVAQALVGAEPYYHLDGPVQSTAKVLEKAGMKIGDIDIVEINEAFASVVLSWARVHEPDMDRVNVNGGAIALGHPVGCTGSRLITTALHELERTDQSLALITMCAGGALSTGTIIERI</sequence>
<dbReference type="EC" id="2.3.1.16" evidence="1 2"/>
<dbReference type="EMBL" id="AL123456">
    <property type="protein sequence ID" value="CCP46368.1"/>
    <property type="molecule type" value="Genomic_DNA"/>
</dbReference>
<dbReference type="RefSeq" id="NP_218063.1">
    <property type="nucleotide sequence ID" value="NC_000962.3"/>
</dbReference>
<dbReference type="RefSeq" id="WP_003419307.1">
    <property type="nucleotide sequence ID" value="NZ_NVQJ01000014.1"/>
</dbReference>
<dbReference type="PDB" id="4UBT">
    <property type="method" value="X-ray"/>
    <property type="resolution" value="1.70 A"/>
    <property type="chains" value="A/B/C/D=1-391"/>
</dbReference>
<dbReference type="PDB" id="4UBU">
    <property type="method" value="X-ray"/>
    <property type="resolution" value="3.00 A"/>
    <property type="chains" value="A/B/C/D/E/F/G/H=1-391"/>
</dbReference>
<dbReference type="PDB" id="4UBV">
    <property type="method" value="X-ray"/>
    <property type="resolution" value="1.95 A"/>
    <property type="chains" value="A/B=1-391"/>
</dbReference>
<dbReference type="PDB" id="4UBW">
    <property type="method" value="X-ray"/>
    <property type="resolution" value="2.70 A"/>
    <property type="chains" value="A/B=1-391"/>
</dbReference>
<dbReference type="PDB" id="5ONC">
    <property type="method" value="X-ray"/>
    <property type="resolution" value="2.19 A"/>
    <property type="chains" value="A/B=1-391"/>
</dbReference>
<dbReference type="PDBsum" id="4UBT"/>
<dbReference type="PDBsum" id="4UBU"/>
<dbReference type="PDBsum" id="4UBV"/>
<dbReference type="PDBsum" id="4UBW"/>
<dbReference type="PDBsum" id="5ONC"/>
<dbReference type="SMR" id="I6XHI4"/>
<dbReference type="FunCoup" id="I6XHI4">
    <property type="interactions" value="231"/>
</dbReference>
<dbReference type="STRING" id="83332.Rv3546"/>
<dbReference type="SwissLipids" id="SLP:000001007"/>
<dbReference type="PaxDb" id="83332-Rv3546"/>
<dbReference type="DNASU" id="887360"/>
<dbReference type="GeneID" id="887360"/>
<dbReference type="KEGG" id="mtu:Rv3546"/>
<dbReference type="KEGG" id="mtv:RVBD_3546"/>
<dbReference type="PATRIC" id="fig|83332.111.peg.3951"/>
<dbReference type="TubercuList" id="Rv3546"/>
<dbReference type="eggNOG" id="COG0183">
    <property type="taxonomic scope" value="Bacteria"/>
</dbReference>
<dbReference type="HOGENOM" id="CLU_031026_2_3_11"/>
<dbReference type="InParanoid" id="I6XHI4"/>
<dbReference type="OrthoDB" id="3607666at2"/>
<dbReference type="PhylomeDB" id="I6XHI4"/>
<dbReference type="BioCyc" id="MetaCyc:G185E-7823-MONOMER"/>
<dbReference type="SABIO-RK" id="I6XHI4"/>
<dbReference type="UniPathway" id="UPA01058"/>
<dbReference type="EvolutionaryTrace" id="I6XHI4"/>
<dbReference type="Proteomes" id="UP000001584">
    <property type="component" value="Chromosome"/>
</dbReference>
<dbReference type="GO" id="GO:0003988">
    <property type="term" value="F:acetyl-CoA C-acyltransferase activity"/>
    <property type="evidence" value="ECO:0000318"/>
    <property type="project" value="GO_Central"/>
</dbReference>
<dbReference type="GO" id="GO:0042802">
    <property type="term" value="F:identical protein binding"/>
    <property type="evidence" value="ECO:0000353"/>
    <property type="project" value="IntAct"/>
</dbReference>
<dbReference type="GO" id="GO:0006707">
    <property type="term" value="P:cholesterol catabolic process"/>
    <property type="evidence" value="ECO:0007669"/>
    <property type="project" value="UniProtKB-UniPathway"/>
</dbReference>
<dbReference type="GO" id="GO:0006635">
    <property type="term" value="P:fatty acid beta-oxidation"/>
    <property type="evidence" value="ECO:0000318"/>
    <property type="project" value="GO_Central"/>
</dbReference>
<dbReference type="GO" id="GO:0010124">
    <property type="term" value="P:phenylacetate catabolic process"/>
    <property type="evidence" value="ECO:0000318"/>
    <property type="project" value="GO_Central"/>
</dbReference>
<dbReference type="CDD" id="cd00751">
    <property type="entry name" value="thiolase"/>
    <property type="match status" value="1"/>
</dbReference>
<dbReference type="Gene3D" id="3.40.47.10">
    <property type="match status" value="2"/>
</dbReference>
<dbReference type="InterPro" id="IPR002155">
    <property type="entry name" value="Thiolase"/>
</dbReference>
<dbReference type="InterPro" id="IPR016039">
    <property type="entry name" value="Thiolase-like"/>
</dbReference>
<dbReference type="InterPro" id="IPR020617">
    <property type="entry name" value="Thiolase_C"/>
</dbReference>
<dbReference type="InterPro" id="IPR020613">
    <property type="entry name" value="Thiolase_CS"/>
</dbReference>
<dbReference type="InterPro" id="IPR020616">
    <property type="entry name" value="Thiolase_N"/>
</dbReference>
<dbReference type="NCBIfam" id="TIGR01930">
    <property type="entry name" value="AcCoA-C-Actrans"/>
    <property type="match status" value="1"/>
</dbReference>
<dbReference type="NCBIfam" id="NF005889">
    <property type="entry name" value="PRK07850.1"/>
    <property type="match status" value="1"/>
</dbReference>
<dbReference type="PANTHER" id="PTHR43365:SF1">
    <property type="entry name" value="ACETYL-COA C-ACYLTRANSFERASE"/>
    <property type="match status" value="1"/>
</dbReference>
<dbReference type="PANTHER" id="PTHR43365">
    <property type="entry name" value="BLR7806 PROTEIN"/>
    <property type="match status" value="1"/>
</dbReference>
<dbReference type="Pfam" id="PF02803">
    <property type="entry name" value="Thiolase_C"/>
    <property type="match status" value="1"/>
</dbReference>
<dbReference type="Pfam" id="PF00108">
    <property type="entry name" value="Thiolase_N"/>
    <property type="match status" value="1"/>
</dbReference>
<dbReference type="PIRSF" id="PIRSF000429">
    <property type="entry name" value="Ac-CoA_Ac_transf"/>
    <property type="match status" value="1"/>
</dbReference>
<dbReference type="SUPFAM" id="SSF53901">
    <property type="entry name" value="Thiolase-like"/>
    <property type="match status" value="2"/>
</dbReference>
<dbReference type="PROSITE" id="PS00737">
    <property type="entry name" value="THIOLASE_2"/>
    <property type="match status" value="1"/>
</dbReference>
<comment type="function">
    <text evidence="1 2">Involved in the beta-oxidation of the cholesterol side chain (PubMed:19822655). It is important for utilization of cholesterol as a sole carbon source in vitro and for full virulence in the chronic stage of mouse lung infection (PubMed:19822655). Catalyzes the thiolysis of 3,22-dioxochol-4-en-24-oyl-CoA to yield 3-oxo-4-pregnene-20-carboxyl-CoA (3-OPC-CoA) and acetyl-CoA (PubMed:25482540). Also able to use acetoacetyl-CoA (AcAcCoA) as substrate (PubMed:19822655).</text>
</comment>
<comment type="catalytic activity">
    <reaction evidence="1 2">
        <text>an acyl-CoA + acetyl-CoA = a 3-oxoacyl-CoA + CoA</text>
        <dbReference type="Rhea" id="RHEA:21564"/>
        <dbReference type="ChEBI" id="CHEBI:57287"/>
        <dbReference type="ChEBI" id="CHEBI:57288"/>
        <dbReference type="ChEBI" id="CHEBI:58342"/>
        <dbReference type="ChEBI" id="CHEBI:90726"/>
        <dbReference type="EC" id="2.3.1.16"/>
    </reaction>
</comment>
<comment type="catalytic activity">
    <reaction evidence="1 2">
        <text>3-oxochol-4-en-22-oyl-CoA + acetyl-CoA = 3,22-dioxochol-4-en-24-oyl-CoA + CoA</text>
        <dbReference type="Rhea" id="RHEA:46312"/>
        <dbReference type="ChEBI" id="CHEBI:57287"/>
        <dbReference type="ChEBI" id="CHEBI:57288"/>
        <dbReference type="ChEBI" id="CHEBI:83792"/>
        <dbReference type="ChEBI" id="CHEBI:86014"/>
    </reaction>
</comment>
<comment type="biophysicochemical properties">
    <kinetics>
        <KM evidence="2">3.1 uM for CoA</KM>
        <KM evidence="1">15 uM for CoA</KM>
        <KM evidence="2">11.8 uM for 3,22-dioxochol-4-en-24-oyl-CoA</KM>
        <KM evidence="1">464 uM for AcAcCoA</KM>
        <text evidence="1 2">kcat is 0.725 sec(-1) for 3,22-dioxochol-4-en-24-oyl-CoA substrate (PubMed:25482540). kcat is 0.076 sec(-1) for AcAcCoA substrate (PubMed:19822655). kcat is 0.018 sec(-1) for CoA substrate (PubMed:19822655).</text>
    </kinetics>
</comment>
<comment type="pathway">
    <text evidence="1">Steroid metabolism; cholesterol degradation.</text>
</comment>
<comment type="subunit">
    <text evidence="2">Dimer of dimers.</text>
</comment>
<comment type="interaction">
    <interactant intactId="EBI-16132055">
        <id>I6XHI4</id>
    </interactant>
    <interactant intactId="EBI-16132055">
        <id>I6XHI4</id>
        <label>fadA5</label>
    </interactant>
    <organismsDiffer>false</organismsDiffer>
    <experiments>3</experiments>
</comment>
<comment type="induction">
    <text evidence="1">Induced by cholesterol and repressed by KstR.</text>
</comment>
<comment type="disruption phenotype">
    <text evidence="1">Cells lacking this gene display an attenuated disease phenotype with reduced colony-forming units in comparison to the wild-type. This mutant is unable to metabolize cholesterol to androst-4-ene-3,17-dione (AD) and androsta-1,4-diene-3,17-dione (ADD).</text>
</comment>
<comment type="similarity">
    <text evidence="5">Belongs to the thiolase-like superfamily. Thiolase family.</text>
</comment>
<proteinExistence type="evidence at protein level"/>
<reference key="1">
    <citation type="journal article" date="1998" name="Nature">
        <title>Deciphering the biology of Mycobacterium tuberculosis from the complete genome sequence.</title>
        <authorList>
            <person name="Cole S.T."/>
            <person name="Brosch R."/>
            <person name="Parkhill J."/>
            <person name="Garnier T."/>
            <person name="Churcher C.M."/>
            <person name="Harris D.E."/>
            <person name="Gordon S.V."/>
            <person name="Eiglmeier K."/>
            <person name="Gas S."/>
            <person name="Barry C.E. III"/>
            <person name="Tekaia F."/>
            <person name="Badcock K."/>
            <person name="Basham D."/>
            <person name="Brown D."/>
            <person name="Chillingworth T."/>
            <person name="Connor R."/>
            <person name="Davies R.M."/>
            <person name="Devlin K."/>
            <person name="Feltwell T."/>
            <person name="Gentles S."/>
            <person name="Hamlin N."/>
            <person name="Holroyd S."/>
            <person name="Hornsby T."/>
            <person name="Jagels K."/>
            <person name="Krogh A."/>
            <person name="McLean J."/>
            <person name="Moule S."/>
            <person name="Murphy L.D."/>
            <person name="Oliver S."/>
            <person name="Osborne J."/>
            <person name="Quail M.A."/>
            <person name="Rajandream M.A."/>
            <person name="Rogers J."/>
            <person name="Rutter S."/>
            <person name="Seeger K."/>
            <person name="Skelton S."/>
            <person name="Squares S."/>
            <person name="Squares R."/>
            <person name="Sulston J.E."/>
            <person name="Taylor K."/>
            <person name="Whitehead S."/>
            <person name="Barrell B.G."/>
        </authorList>
    </citation>
    <scope>NUCLEOTIDE SEQUENCE [LARGE SCALE GENOMIC DNA]</scope>
    <source>
        <strain>ATCC 25618 / H37Rv</strain>
    </source>
</reference>
<reference key="2">
    <citation type="journal article" date="2002" name="Microbiology">
        <title>Re-annotation of the genome sequence of Mycobacterium tuberculosis H37Rv.</title>
        <authorList>
            <person name="Camus J.-C."/>
            <person name="Pryor M.J."/>
            <person name="Medigue C."/>
            <person name="Cole S.T."/>
        </authorList>
    </citation>
    <scope>SEQUENCE REVISION</scope>
    <source>
        <strain>ATCC 25618 / H37Rv</strain>
    </source>
</reference>
<reference key="3">
    <citation type="journal article" date="2010" name="Infect. Immun.">
        <title>A thiolase of Mycobacterium tuberculosis is required for virulence and production of androstenedione and androstadienedione from cholesterol.</title>
        <authorList>
            <person name="Nesbitt N.M."/>
            <person name="Yang X."/>
            <person name="Fontan P."/>
            <person name="Kolesnikova I."/>
            <person name="Smith I."/>
            <person name="Sampson N.S."/>
            <person name="Dubnau E."/>
        </authorList>
    </citation>
    <scope>FUNCTION</scope>
    <scope>CATALYTIC ACTIVITY</scope>
    <scope>BIOPHYSICOCHEMICAL PROPERTIES</scope>
    <scope>INDUCTION</scope>
    <scope>DISRUPTION PHENOTYPE</scope>
    <scope>PATHWAY</scope>
    <scope>SUBSTRATE SPECIFICITY</scope>
    <source>
        <strain>H37Rv</strain>
    </source>
</reference>
<reference key="4">
    <citation type="journal article" date="2011" name="Mol. Cell. Proteomics">
        <title>Proteogenomic analysis of Mycobacterium tuberculosis by high resolution mass spectrometry.</title>
        <authorList>
            <person name="Kelkar D.S."/>
            <person name="Kumar D."/>
            <person name="Kumar P."/>
            <person name="Balakrishnan L."/>
            <person name="Muthusamy B."/>
            <person name="Yadav A.K."/>
            <person name="Shrivastava P."/>
            <person name="Marimuthu A."/>
            <person name="Anand S."/>
            <person name="Sundaram H."/>
            <person name="Kingsbury R."/>
            <person name="Harsha H.C."/>
            <person name="Nair B."/>
            <person name="Prasad T.S."/>
            <person name="Chauhan D.S."/>
            <person name="Katoch K."/>
            <person name="Katoch V.M."/>
            <person name="Kumar P."/>
            <person name="Chaerkady R."/>
            <person name="Ramachandran S."/>
            <person name="Dash D."/>
            <person name="Pandey A."/>
        </authorList>
    </citation>
    <scope>IDENTIFICATION BY MASS SPECTROMETRY [LARGE SCALE ANALYSIS]</scope>
    <source>
        <strain>ATCC 25618 / H37Rv</strain>
    </source>
</reference>
<reference key="5">
    <citation type="journal article" date="2015" name="Structure">
        <title>FadA5 a thiolase from Mycobacterium tuberculosis: a steroid-binding pocket reveals the potential for drug development against tuberculosis.</title>
        <authorList>
            <person name="Schaefer C.M."/>
            <person name="Lu R."/>
            <person name="Nesbitt N.M."/>
            <person name="Schiebel J."/>
            <person name="Sampson N.S."/>
            <person name="Kisker C."/>
        </authorList>
    </citation>
    <scope>X-RAY CRYSTALLOGRAPHY (1.70 ANGSTROMS) OF WILD-TYPE AND MUTANT SER-93 IN COMPLEX WITH SUBSTRATE ANALOGS</scope>
    <scope>FUNCTION</scope>
    <scope>CATALYTIC ACTIVITY</scope>
    <scope>BIOPHYSICOCHEMICAL PROPERTIES</scope>
    <scope>ACTIVE SITE</scope>
    <scope>SUBUNIT</scope>
</reference>
<accession>I6XHI4</accession>
<evidence type="ECO:0000269" key="1">
    <source>
    </source>
</evidence>
<evidence type="ECO:0000269" key="2">
    <source>
    </source>
</evidence>
<evidence type="ECO:0000303" key="3">
    <source>
    </source>
</evidence>
<evidence type="ECO:0000303" key="4">
    <source>
    </source>
</evidence>
<evidence type="ECO:0000305" key="5"/>
<evidence type="ECO:0000305" key="6">
    <source>
    </source>
</evidence>
<evidence type="ECO:0007744" key="7">
    <source>
        <dbReference type="PDB" id="4UBT"/>
    </source>
</evidence>
<evidence type="ECO:0007744" key="8">
    <source>
        <dbReference type="PDB" id="4UBU"/>
    </source>
</evidence>
<evidence type="ECO:0007744" key="9">
    <source>
        <dbReference type="PDB" id="4UBV"/>
    </source>
</evidence>
<evidence type="ECO:0007829" key="10">
    <source>
        <dbReference type="PDB" id="4UBT"/>
    </source>
</evidence>
<evidence type="ECO:0007829" key="11">
    <source>
        <dbReference type="PDB" id="4UBW"/>
    </source>
</evidence>
<feature type="chain" id="PRO_0000438502" description="Steroid 3-ketoacyl-CoA thiolase">
    <location>
        <begin position="1"/>
        <end position="391"/>
    </location>
</feature>
<feature type="active site" description="Acyl-thioester intermediate" evidence="6 9">
    <location>
        <position position="93"/>
    </location>
</feature>
<feature type="active site" description="Proton acceptor" evidence="6 9">
    <location>
        <position position="347"/>
    </location>
</feature>
<feature type="active site" description="Proton acceptor" evidence="6">
    <location>
        <position position="377"/>
    </location>
</feature>
<feature type="binding site" evidence="2 7">
    <location>
        <position position="151"/>
    </location>
    <ligand>
        <name>CoA</name>
        <dbReference type="ChEBI" id="CHEBI:57287"/>
    </ligand>
</feature>
<feature type="binding site" evidence="2 7 9">
    <location>
        <begin position="221"/>
        <end position="223"/>
    </location>
    <ligand>
        <name>CoA</name>
        <dbReference type="ChEBI" id="CHEBI:57287"/>
    </ligand>
</feature>
<feature type="binding site" evidence="2 7 8 9">
    <location>
        <position position="246"/>
    </location>
    <ligand>
        <name>CoA</name>
        <dbReference type="ChEBI" id="CHEBI:57287"/>
    </ligand>
</feature>
<feature type="binding site" evidence="2 7">
    <location>
        <position position="379"/>
    </location>
    <ligand>
        <name>substrate</name>
    </ligand>
</feature>
<feature type="strand" evidence="10">
    <location>
        <begin position="4"/>
        <end position="11"/>
    </location>
</feature>
<feature type="turn" evidence="10">
    <location>
        <begin position="20"/>
        <end position="23"/>
    </location>
</feature>
<feature type="helix" evidence="10">
    <location>
        <begin position="26"/>
        <end position="42"/>
    </location>
</feature>
<feature type="strand" evidence="11">
    <location>
        <begin position="43"/>
        <end position="45"/>
    </location>
</feature>
<feature type="helix" evidence="10">
    <location>
        <begin position="49"/>
        <end position="51"/>
    </location>
</feature>
<feature type="strand" evidence="10">
    <location>
        <begin position="54"/>
        <end position="58"/>
    </location>
</feature>
<feature type="helix" evidence="10">
    <location>
        <begin position="64"/>
        <end position="66"/>
    </location>
</feature>
<feature type="turn" evidence="10">
    <location>
        <begin position="67"/>
        <end position="69"/>
    </location>
</feature>
<feature type="helix" evidence="10">
    <location>
        <begin position="70"/>
        <end position="77"/>
    </location>
</feature>
<feature type="strand" evidence="10">
    <location>
        <begin position="85"/>
        <end position="91"/>
    </location>
</feature>
<feature type="helix" evidence="10">
    <location>
        <begin position="92"/>
        <end position="94"/>
    </location>
</feature>
<feature type="helix" evidence="10">
    <location>
        <begin position="95"/>
        <end position="108"/>
    </location>
</feature>
<feature type="strand" evidence="10">
    <location>
        <begin position="113"/>
        <end position="122"/>
    </location>
</feature>
<feature type="turn" evidence="10">
    <location>
        <begin position="123"/>
        <end position="125"/>
    </location>
</feature>
<feature type="turn" evidence="10">
    <location>
        <begin position="128"/>
        <end position="132"/>
    </location>
</feature>
<feature type="helix" evidence="10">
    <location>
        <begin position="136"/>
        <end position="139"/>
    </location>
</feature>
<feature type="helix" evidence="10">
    <location>
        <begin position="151"/>
        <end position="162"/>
    </location>
</feature>
<feature type="helix" evidence="10">
    <location>
        <begin position="166"/>
        <end position="185"/>
    </location>
</feature>
<feature type="turn" evidence="10">
    <location>
        <begin position="186"/>
        <end position="192"/>
    </location>
</feature>
<feature type="strand" evidence="10">
    <location>
        <begin position="196"/>
        <end position="201"/>
    </location>
</feature>
<feature type="strand" evidence="10">
    <location>
        <begin position="207"/>
        <end position="214"/>
    </location>
</feature>
<feature type="helix" evidence="10">
    <location>
        <begin position="225"/>
        <end position="230"/>
    </location>
</feature>
<feature type="helix" evidence="10">
    <location>
        <begin position="242"/>
        <end position="244"/>
    </location>
</feature>
<feature type="strand" evidence="10">
    <location>
        <begin position="249"/>
        <end position="259"/>
    </location>
</feature>
<feature type="helix" evidence="10">
    <location>
        <begin position="260"/>
        <end position="265"/>
    </location>
</feature>
<feature type="strand" evidence="10">
    <location>
        <begin position="272"/>
        <end position="281"/>
    </location>
</feature>
<feature type="turn" evidence="10">
    <location>
        <begin position="284"/>
        <end position="286"/>
    </location>
</feature>
<feature type="helix" evidence="10">
    <location>
        <begin position="291"/>
        <end position="302"/>
    </location>
</feature>
<feature type="helix" evidence="10">
    <location>
        <begin position="306"/>
        <end position="308"/>
    </location>
</feature>
<feature type="strand" evidence="10">
    <location>
        <begin position="310"/>
        <end position="314"/>
    </location>
</feature>
<feature type="helix" evidence="10">
    <location>
        <begin position="319"/>
        <end position="329"/>
    </location>
</feature>
<feature type="helix" evidence="10">
    <location>
        <begin position="333"/>
        <end position="335"/>
    </location>
</feature>
<feature type="helix" evidence="10">
    <location>
        <begin position="342"/>
        <end position="345"/>
    </location>
</feature>
<feature type="turn" evidence="10">
    <location>
        <begin position="349"/>
        <end position="351"/>
    </location>
</feature>
<feature type="helix" evidence="10">
    <location>
        <begin position="352"/>
        <end position="367"/>
    </location>
</feature>
<feature type="strand" evidence="10">
    <location>
        <begin position="371"/>
        <end position="378"/>
    </location>
</feature>
<feature type="turn" evidence="10">
    <location>
        <begin position="379"/>
        <end position="381"/>
    </location>
</feature>
<feature type="strand" evidence="10">
    <location>
        <begin position="382"/>
        <end position="390"/>
    </location>
</feature>
<protein>
    <recommendedName>
        <fullName evidence="4">Steroid 3-ketoacyl-CoA thiolase</fullName>
        <ecNumber evidence="1 2">2.3.1.16</ecNumber>
    </recommendedName>
    <alternativeName>
        <fullName evidence="3">Acetyl-CoA acetyltransferase FadA5</fullName>
    </alternativeName>
    <alternativeName>
        <fullName evidence="3">Beta-ketoacyl-CoA thiolase</fullName>
    </alternativeName>
</protein>